<accession>A8AQ77</accession>
<evidence type="ECO:0000255" key="1">
    <source>
        <dbReference type="HAMAP-Rule" id="MF_00539"/>
    </source>
</evidence>
<evidence type="ECO:0000256" key="2">
    <source>
        <dbReference type="SAM" id="MobiDB-lite"/>
    </source>
</evidence>
<evidence type="ECO:0000305" key="3"/>
<keyword id="KW-1185">Reference proteome</keyword>
<keyword id="KW-0687">Ribonucleoprotein</keyword>
<keyword id="KW-0689">Ribosomal protein</keyword>
<feature type="chain" id="PRO_1000017451" description="Large ribosomal subunit protein bL27">
    <location>
        <begin position="1"/>
        <end position="85"/>
    </location>
</feature>
<feature type="region of interest" description="Disordered" evidence="2">
    <location>
        <begin position="1"/>
        <end position="20"/>
    </location>
</feature>
<gene>
    <name evidence="1" type="primary">rpmA</name>
    <name type="ordered locus">CKO_04589</name>
</gene>
<comment type="similarity">
    <text evidence="1">Belongs to the bacterial ribosomal protein bL27 family.</text>
</comment>
<name>RL27_CITK8</name>
<proteinExistence type="inferred from homology"/>
<dbReference type="EMBL" id="CP000822">
    <property type="protein sequence ID" value="ABV15640.1"/>
    <property type="molecule type" value="Genomic_DNA"/>
</dbReference>
<dbReference type="RefSeq" id="WP_012135319.1">
    <property type="nucleotide sequence ID" value="NC_009792.1"/>
</dbReference>
<dbReference type="SMR" id="A8AQ77"/>
<dbReference type="STRING" id="290338.CKO_04589"/>
<dbReference type="GeneID" id="45138128"/>
<dbReference type="KEGG" id="cko:CKO_04589"/>
<dbReference type="HOGENOM" id="CLU_095424_4_1_6"/>
<dbReference type="OrthoDB" id="9803474at2"/>
<dbReference type="Proteomes" id="UP000008148">
    <property type="component" value="Chromosome"/>
</dbReference>
<dbReference type="GO" id="GO:0022625">
    <property type="term" value="C:cytosolic large ribosomal subunit"/>
    <property type="evidence" value="ECO:0007669"/>
    <property type="project" value="TreeGrafter"/>
</dbReference>
<dbReference type="GO" id="GO:0003735">
    <property type="term" value="F:structural constituent of ribosome"/>
    <property type="evidence" value="ECO:0007669"/>
    <property type="project" value="InterPro"/>
</dbReference>
<dbReference type="GO" id="GO:0006412">
    <property type="term" value="P:translation"/>
    <property type="evidence" value="ECO:0007669"/>
    <property type="project" value="UniProtKB-UniRule"/>
</dbReference>
<dbReference type="FunFam" id="2.40.50.100:FF:000001">
    <property type="entry name" value="50S ribosomal protein L27"/>
    <property type="match status" value="1"/>
</dbReference>
<dbReference type="Gene3D" id="2.40.50.100">
    <property type="match status" value="1"/>
</dbReference>
<dbReference type="HAMAP" id="MF_00539">
    <property type="entry name" value="Ribosomal_bL27"/>
    <property type="match status" value="1"/>
</dbReference>
<dbReference type="InterPro" id="IPR001684">
    <property type="entry name" value="Ribosomal_bL27"/>
</dbReference>
<dbReference type="InterPro" id="IPR018261">
    <property type="entry name" value="Ribosomal_bL27_CS"/>
</dbReference>
<dbReference type="NCBIfam" id="TIGR00062">
    <property type="entry name" value="L27"/>
    <property type="match status" value="1"/>
</dbReference>
<dbReference type="PANTHER" id="PTHR15893:SF0">
    <property type="entry name" value="LARGE RIBOSOMAL SUBUNIT PROTEIN BL27M"/>
    <property type="match status" value="1"/>
</dbReference>
<dbReference type="PANTHER" id="PTHR15893">
    <property type="entry name" value="RIBOSOMAL PROTEIN L27"/>
    <property type="match status" value="1"/>
</dbReference>
<dbReference type="Pfam" id="PF01016">
    <property type="entry name" value="Ribosomal_L27"/>
    <property type="match status" value="1"/>
</dbReference>
<dbReference type="PRINTS" id="PR00063">
    <property type="entry name" value="RIBOSOMALL27"/>
</dbReference>
<dbReference type="SUPFAM" id="SSF110324">
    <property type="entry name" value="Ribosomal L27 protein-like"/>
    <property type="match status" value="1"/>
</dbReference>
<dbReference type="PROSITE" id="PS00831">
    <property type="entry name" value="RIBOSOMAL_L27"/>
    <property type="match status" value="1"/>
</dbReference>
<organism>
    <name type="scientific">Citrobacter koseri (strain ATCC BAA-895 / CDC 4225-83 / SGSC4696)</name>
    <dbReference type="NCBI Taxonomy" id="290338"/>
    <lineage>
        <taxon>Bacteria</taxon>
        <taxon>Pseudomonadati</taxon>
        <taxon>Pseudomonadota</taxon>
        <taxon>Gammaproteobacteria</taxon>
        <taxon>Enterobacterales</taxon>
        <taxon>Enterobacteriaceae</taxon>
        <taxon>Citrobacter</taxon>
    </lineage>
</organism>
<sequence length="85" mass="9140">MAHKKAGGSTRNGRDSEAKRLGVKRFGGETVLAGSIIVRQRGTKFHAGTNVGCGRDHTLFAKADGKVKFEVKGPNNRKYISIVAE</sequence>
<reference key="1">
    <citation type="submission" date="2007-08" db="EMBL/GenBank/DDBJ databases">
        <authorList>
            <consortium name="The Citrobacter koseri Genome Sequencing Project"/>
            <person name="McClelland M."/>
            <person name="Sanderson E.K."/>
            <person name="Porwollik S."/>
            <person name="Spieth J."/>
            <person name="Clifton W.S."/>
            <person name="Latreille P."/>
            <person name="Courtney L."/>
            <person name="Wang C."/>
            <person name="Pepin K."/>
            <person name="Bhonagiri V."/>
            <person name="Nash W."/>
            <person name="Johnson M."/>
            <person name="Thiruvilangam P."/>
            <person name="Wilson R."/>
        </authorList>
    </citation>
    <scope>NUCLEOTIDE SEQUENCE [LARGE SCALE GENOMIC DNA]</scope>
    <source>
        <strain>ATCC BAA-895 / CDC 4225-83 / SGSC4696</strain>
    </source>
</reference>
<protein>
    <recommendedName>
        <fullName evidence="1">Large ribosomal subunit protein bL27</fullName>
    </recommendedName>
    <alternativeName>
        <fullName evidence="3">50S ribosomal protein L27</fullName>
    </alternativeName>
</protein>